<protein>
    <recommendedName>
        <fullName evidence="1">Phosphoenolpyruvate synthase regulatory protein</fullName>
        <shortName evidence="1">PEP synthase regulatory protein</shortName>
        <shortName evidence="1">PSRP</shortName>
        <ecNumber evidence="1">2.7.11.33</ecNumber>
        <ecNumber evidence="1">2.7.4.28</ecNumber>
    </recommendedName>
    <alternativeName>
        <fullName evidence="1">Pyruvate, water dikinase regulatory protein</fullName>
    </alternativeName>
</protein>
<gene>
    <name evidence="1" type="primary">ppsR</name>
    <name type="ordered locus">ECUMN_1994</name>
</gene>
<keyword id="KW-0418">Kinase</keyword>
<keyword id="KW-0547">Nucleotide-binding</keyword>
<keyword id="KW-0723">Serine/threonine-protein kinase</keyword>
<keyword id="KW-0808">Transferase</keyword>
<organism>
    <name type="scientific">Escherichia coli O17:K52:H18 (strain UMN026 / ExPEC)</name>
    <dbReference type="NCBI Taxonomy" id="585056"/>
    <lineage>
        <taxon>Bacteria</taxon>
        <taxon>Pseudomonadati</taxon>
        <taxon>Pseudomonadota</taxon>
        <taxon>Gammaproteobacteria</taxon>
        <taxon>Enterobacterales</taxon>
        <taxon>Enterobacteriaceae</taxon>
        <taxon>Escherichia</taxon>
    </lineage>
</organism>
<dbReference type="EC" id="2.7.11.33" evidence="1"/>
<dbReference type="EC" id="2.7.4.28" evidence="1"/>
<dbReference type="EMBL" id="CU928163">
    <property type="protein sequence ID" value="CAR13190.1"/>
    <property type="molecule type" value="Genomic_DNA"/>
</dbReference>
<dbReference type="RefSeq" id="WP_000368041.1">
    <property type="nucleotide sequence ID" value="NC_011751.1"/>
</dbReference>
<dbReference type="RefSeq" id="YP_002412722.1">
    <property type="nucleotide sequence ID" value="NC_011751.1"/>
</dbReference>
<dbReference type="SMR" id="B7N541"/>
<dbReference type="STRING" id="585056.ECUMN_1994"/>
<dbReference type="KEGG" id="eum:ECUMN_1994"/>
<dbReference type="PATRIC" id="fig|585056.7.peg.2179"/>
<dbReference type="HOGENOM" id="CLU_046206_1_0_6"/>
<dbReference type="Proteomes" id="UP000007097">
    <property type="component" value="Chromosome"/>
</dbReference>
<dbReference type="GO" id="GO:0043531">
    <property type="term" value="F:ADP binding"/>
    <property type="evidence" value="ECO:0007669"/>
    <property type="project" value="UniProtKB-UniRule"/>
</dbReference>
<dbReference type="GO" id="GO:0005524">
    <property type="term" value="F:ATP binding"/>
    <property type="evidence" value="ECO:0007669"/>
    <property type="project" value="InterPro"/>
</dbReference>
<dbReference type="GO" id="GO:0016776">
    <property type="term" value="F:phosphotransferase activity, phosphate group as acceptor"/>
    <property type="evidence" value="ECO:0007669"/>
    <property type="project" value="UniProtKB-UniRule"/>
</dbReference>
<dbReference type="GO" id="GO:0004674">
    <property type="term" value="F:protein serine/threonine kinase activity"/>
    <property type="evidence" value="ECO:0007669"/>
    <property type="project" value="UniProtKB-UniRule"/>
</dbReference>
<dbReference type="HAMAP" id="MF_01062">
    <property type="entry name" value="PSRP"/>
    <property type="match status" value="1"/>
</dbReference>
<dbReference type="InterPro" id="IPR005177">
    <property type="entry name" value="Kinase-pyrophosphorylase"/>
</dbReference>
<dbReference type="InterPro" id="IPR026530">
    <property type="entry name" value="PSRP"/>
</dbReference>
<dbReference type="NCBIfam" id="NF003742">
    <property type="entry name" value="PRK05339.1"/>
    <property type="match status" value="1"/>
</dbReference>
<dbReference type="PANTHER" id="PTHR31756">
    <property type="entry name" value="PYRUVATE, PHOSPHATE DIKINASE REGULATORY PROTEIN 1, CHLOROPLASTIC"/>
    <property type="match status" value="1"/>
</dbReference>
<dbReference type="PANTHER" id="PTHR31756:SF3">
    <property type="entry name" value="PYRUVATE, PHOSPHATE DIKINASE REGULATORY PROTEIN 1, CHLOROPLASTIC"/>
    <property type="match status" value="1"/>
</dbReference>
<dbReference type="Pfam" id="PF03618">
    <property type="entry name" value="Kinase-PPPase"/>
    <property type="match status" value="1"/>
</dbReference>
<comment type="function">
    <text evidence="1">Bifunctional serine/threonine kinase and phosphorylase involved in the regulation of the phosphoenolpyruvate synthase (PEPS) by catalyzing its phosphorylation/dephosphorylation.</text>
</comment>
<comment type="catalytic activity">
    <reaction evidence="1">
        <text>[pyruvate, water dikinase] + ADP = [pyruvate, water dikinase]-phosphate + AMP + H(+)</text>
        <dbReference type="Rhea" id="RHEA:46020"/>
        <dbReference type="Rhea" id="RHEA-COMP:11425"/>
        <dbReference type="Rhea" id="RHEA-COMP:11426"/>
        <dbReference type="ChEBI" id="CHEBI:15378"/>
        <dbReference type="ChEBI" id="CHEBI:43176"/>
        <dbReference type="ChEBI" id="CHEBI:68546"/>
        <dbReference type="ChEBI" id="CHEBI:456215"/>
        <dbReference type="ChEBI" id="CHEBI:456216"/>
        <dbReference type="EC" id="2.7.11.33"/>
    </reaction>
</comment>
<comment type="catalytic activity">
    <reaction evidence="1">
        <text>[pyruvate, water dikinase]-phosphate + phosphate + H(+) = [pyruvate, water dikinase] + diphosphate</text>
        <dbReference type="Rhea" id="RHEA:48580"/>
        <dbReference type="Rhea" id="RHEA-COMP:11425"/>
        <dbReference type="Rhea" id="RHEA-COMP:11426"/>
        <dbReference type="ChEBI" id="CHEBI:15378"/>
        <dbReference type="ChEBI" id="CHEBI:33019"/>
        <dbReference type="ChEBI" id="CHEBI:43176"/>
        <dbReference type="ChEBI" id="CHEBI:43474"/>
        <dbReference type="ChEBI" id="CHEBI:68546"/>
        <dbReference type="EC" id="2.7.4.28"/>
    </reaction>
</comment>
<comment type="similarity">
    <text evidence="1">Belongs to the pyruvate, phosphate/water dikinase regulatory protein family. PSRP subfamily.</text>
</comment>
<name>PSRP_ECOLU</name>
<accession>B7N541</accession>
<reference key="1">
    <citation type="journal article" date="2009" name="PLoS Genet.">
        <title>Organised genome dynamics in the Escherichia coli species results in highly diverse adaptive paths.</title>
        <authorList>
            <person name="Touchon M."/>
            <person name="Hoede C."/>
            <person name="Tenaillon O."/>
            <person name="Barbe V."/>
            <person name="Baeriswyl S."/>
            <person name="Bidet P."/>
            <person name="Bingen E."/>
            <person name="Bonacorsi S."/>
            <person name="Bouchier C."/>
            <person name="Bouvet O."/>
            <person name="Calteau A."/>
            <person name="Chiapello H."/>
            <person name="Clermont O."/>
            <person name="Cruveiller S."/>
            <person name="Danchin A."/>
            <person name="Diard M."/>
            <person name="Dossat C."/>
            <person name="Karoui M.E."/>
            <person name="Frapy E."/>
            <person name="Garry L."/>
            <person name="Ghigo J.M."/>
            <person name="Gilles A.M."/>
            <person name="Johnson J."/>
            <person name="Le Bouguenec C."/>
            <person name="Lescat M."/>
            <person name="Mangenot S."/>
            <person name="Martinez-Jehanne V."/>
            <person name="Matic I."/>
            <person name="Nassif X."/>
            <person name="Oztas S."/>
            <person name="Petit M.A."/>
            <person name="Pichon C."/>
            <person name="Rouy Z."/>
            <person name="Ruf C.S."/>
            <person name="Schneider D."/>
            <person name="Tourret J."/>
            <person name="Vacherie B."/>
            <person name="Vallenet D."/>
            <person name="Medigue C."/>
            <person name="Rocha E.P.C."/>
            <person name="Denamur E."/>
        </authorList>
    </citation>
    <scope>NUCLEOTIDE SEQUENCE [LARGE SCALE GENOMIC DNA]</scope>
    <source>
        <strain>UMN026 / ExPEC</strain>
    </source>
</reference>
<proteinExistence type="inferred from homology"/>
<sequence length="277" mass="31212">MDNAVDRHVFYISDGTAITAEVLGHAVMSQFPVTISSITLPFVENESRARAVKDQIDAIYHQTGVRPLVFYSIVLPEIRAIILESEGFCQDIVQALVAPLQQEMKLDPTPIAHRTHGLNPNNLNKYDARIAAIDYTLAHDDGISLRNLDQAQVILLGVSRCGKTPTSLYLAMQFGIRAANYPFIADDMDNLVLPASLKPLQHKLFGLTIDPERLAAIREERRENSRYASLRQCRMEVAEVEALYRKNQIPWINSTNYSVEEIATKILDIMGLSRRMY</sequence>
<evidence type="ECO:0000255" key="1">
    <source>
        <dbReference type="HAMAP-Rule" id="MF_01062"/>
    </source>
</evidence>
<feature type="chain" id="PRO_1000136471" description="Phosphoenolpyruvate synthase regulatory protein">
    <location>
        <begin position="1"/>
        <end position="277"/>
    </location>
</feature>
<feature type="binding site" evidence="1">
    <location>
        <begin position="157"/>
        <end position="164"/>
    </location>
    <ligand>
        <name>ADP</name>
        <dbReference type="ChEBI" id="CHEBI:456216"/>
    </ligand>
</feature>